<proteinExistence type="predicted"/>
<feature type="chain" id="PRO_0000309267" description="Uncharacterized protein CBU_0041">
    <location>
        <begin position="1"/>
        <end position="710"/>
    </location>
</feature>
<feature type="coiled-coil region" evidence="1">
    <location>
        <begin position="273"/>
        <end position="298"/>
    </location>
</feature>
<feature type="coiled-coil region" evidence="1">
    <location>
        <begin position="477"/>
        <end position="528"/>
    </location>
</feature>
<dbReference type="EMBL" id="AE016828">
    <property type="protein sequence ID" value="AAO89610.1"/>
    <property type="molecule type" value="Genomic_DNA"/>
</dbReference>
<dbReference type="RefSeq" id="NP_819096.1">
    <property type="nucleotide sequence ID" value="NC_002971.4"/>
</dbReference>
<dbReference type="RefSeq" id="WP_010957340.1">
    <property type="nucleotide sequence ID" value="NC_002971.4"/>
</dbReference>
<dbReference type="SMR" id="Q83FA5"/>
<dbReference type="IntAct" id="Q83FA5">
    <property type="interactions" value="9"/>
</dbReference>
<dbReference type="MINT" id="Q83FA5"/>
<dbReference type="STRING" id="227377.CBU_0041"/>
<dbReference type="EnsemblBacteria" id="AAO89610">
    <property type="protein sequence ID" value="AAO89610"/>
    <property type="gene ID" value="CBU_0041"/>
</dbReference>
<dbReference type="GeneID" id="1207903"/>
<dbReference type="KEGG" id="cbu:CBU_0041"/>
<dbReference type="PATRIC" id="fig|227377.7.peg.42"/>
<dbReference type="HOGENOM" id="CLU_388683_0_0_6"/>
<dbReference type="PHI-base" id="PHI:7060"/>
<dbReference type="Proteomes" id="UP000002671">
    <property type="component" value="Chromosome"/>
</dbReference>
<dbReference type="GO" id="GO:0141030">
    <property type="term" value="P:symbiont-mediated perturbation of host actin cytoskeleton via filamentous actin depolymerization"/>
    <property type="evidence" value="ECO:0000269"/>
    <property type="project" value="SigSci"/>
</dbReference>
<name>Y041_COXBU</name>
<gene>
    <name type="ordered locus">CBU_0041</name>
</gene>
<protein>
    <recommendedName>
        <fullName>Uncharacterized protein CBU_0041</fullName>
    </recommendedName>
</protein>
<evidence type="ECO:0000255" key="1"/>
<accession>Q83FA5</accession>
<reference key="1">
    <citation type="journal article" date="2003" name="Proc. Natl. Acad. Sci. U.S.A.">
        <title>Complete genome sequence of the Q-fever pathogen, Coxiella burnetii.</title>
        <authorList>
            <person name="Seshadri R."/>
            <person name="Paulsen I.T."/>
            <person name="Eisen J.A."/>
            <person name="Read T.D."/>
            <person name="Nelson K.E."/>
            <person name="Nelson W.C."/>
            <person name="Ward N.L."/>
            <person name="Tettelin H."/>
            <person name="Davidsen T.M."/>
            <person name="Beanan M.J."/>
            <person name="DeBoy R.T."/>
            <person name="Daugherty S.C."/>
            <person name="Brinkac L.M."/>
            <person name="Madupu R."/>
            <person name="Dodson R.J."/>
            <person name="Khouri H.M."/>
            <person name="Lee K.H."/>
            <person name="Carty H.A."/>
            <person name="Scanlan D."/>
            <person name="Heinzen R.A."/>
            <person name="Thompson H.A."/>
            <person name="Samuel J.E."/>
            <person name="Fraser C.M."/>
            <person name="Heidelberg J.F."/>
        </authorList>
    </citation>
    <scope>NUCLEOTIDE SEQUENCE [LARGE SCALE GENOMIC DNA]</scope>
    <source>
        <strain>RSA 493 / Nine Mile phase I</strain>
    </source>
</reference>
<sequence length="710" mass="82662">MRDGTTRVNTTGMRLKTITDVLIKLSQSSTHYDSAIFTSHKVKKFNLTTNENEPIEIWVYDDTSSSFPILTEYLKKHLESLIAAANHIFNRNEQLKKHWHETLVYIKKALEERLKFNIDLKQARKLVRDLINEIGFFWINQQPTMITTASQLYKGFLTKLFEAVEIAIPDYKRNHILVIQQTGDIIKCEYYERGTSRSLRSNVENALIEYRFAENTHESEKTKDFPSAHYRGKLGLCNVATCFSATFDANNETTSCKIYYRHASFPPIDLYPLYRQERKELKNTKQRYLKKKNEMEEGGKAMVNWQNRAFKTQQCREGIKLITTRNMEMLRDLMRKNRSELELLPAERPPLIYTNISLLTVKQWMDKDFQEEQYHDTILAAERLRSRGNRENEDKFVPIMFNFGVNLQAKWQRRKSWWRPSLPKEQVFENDRAFFKFNHLVIERLQLIASKKTFSFAKTQALPHLWELNEIASSWNRYEKTLDCLANAYDAACNNYEKDPSKENIEYLQECEEKLSQAKKNLWKVADTHIAFYRKDFKQLIANRSNFSNDDSELQAILKDWKMFNSLYLRDAWHDASFSIQTSIGNLTRVVGSELSINCKSADDRTTGFCRRFEGSEEGKDASSPHVRNDTDGGSIKFTGWAKTKKAKAIAKTEKKIAEAFSTHKLKKAVVAKSKIPTSHSLISSSSFWKLKAPDTSPFLTTNLPHSLSG</sequence>
<keyword id="KW-0175">Coiled coil</keyword>
<keyword id="KW-1185">Reference proteome</keyword>
<organism>
    <name type="scientific">Coxiella burnetii (strain RSA 493 / Nine Mile phase I)</name>
    <dbReference type="NCBI Taxonomy" id="227377"/>
    <lineage>
        <taxon>Bacteria</taxon>
        <taxon>Pseudomonadati</taxon>
        <taxon>Pseudomonadota</taxon>
        <taxon>Gammaproteobacteria</taxon>
        <taxon>Legionellales</taxon>
        <taxon>Coxiellaceae</taxon>
        <taxon>Coxiella</taxon>
    </lineage>
</organism>